<comment type="catalytic activity">
    <reaction evidence="1">
        <text>a quinone + NADH + H(+) = a quinol + NAD(+)</text>
        <dbReference type="Rhea" id="RHEA:46160"/>
        <dbReference type="ChEBI" id="CHEBI:15378"/>
        <dbReference type="ChEBI" id="CHEBI:24646"/>
        <dbReference type="ChEBI" id="CHEBI:57540"/>
        <dbReference type="ChEBI" id="CHEBI:57945"/>
        <dbReference type="ChEBI" id="CHEBI:132124"/>
        <dbReference type="EC" id="1.6.5.2"/>
    </reaction>
</comment>
<comment type="catalytic activity">
    <reaction evidence="1">
        <text>a quinone + NADPH + H(+) = a quinol + NADP(+)</text>
        <dbReference type="Rhea" id="RHEA:46164"/>
        <dbReference type="ChEBI" id="CHEBI:15378"/>
        <dbReference type="ChEBI" id="CHEBI:24646"/>
        <dbReference type="ChEBI" id="CHEBI:57783"/>
        <dbReference type="ChEBI" id="CHEBI:58349"/>
        <dbReference type="ChEBI" id="CHEBI:132124"/>
        <dbReference type="EC" id="1.6.5.2"/>
    </reaction>
</comment>
<comment type="cofactor">
    <cofactor evidence="1">
        <name>FMN</name>
        <dbReference type="ChEBI" id="CHEBI:58210"/>
    </cofactor>
    <text evidence="1">Binds 1 FMN per monomer.</text>
</comment>
<comment type="similarity">
    <text evidence="1">Belongs to the WrbA family.</text>
</comment>
<sequence>MAKVLVLYYSMYGHIETMARAVAEGASKVDGAEVVVKRVPETMPPQLFEKAGGKTQTAPVATPQELADYDAIIFGTPTRFGNMSGQMRTFLDQTGGLWASGALYGKLASVFSSTGTGGGQEQTITSTWTTLAHHGMVIVPIGYAAQELFDVSQVRGGTPYGATTIAGGDGSRQPSQEELSIARYQGEYVAGLAVKLNG</sequence>
<dbReference type="EC" id="1.6.5.2" evidence="1"/>
<dbReference type="EMBL" id="CP001396">
    <property type="protein sequence ID" value="ACR63859.1"/>
    <property type="molecule type" value="Genomic_DNA"/>
</dbReference>
<dbReference type="SMR" id="C4ZQD2"/>
<dbReference type="KEGG" id="ebw:BWG_0858"/>
<dbReference type="HOGENOM" id="CLU_051402_0_2_6"/>
<dbReference type="GO" id="GO:0016020">
    <property type="term" value="C:membrane"/>
    <property type="evidence" value="ECO:0007669"/>
    <property type="project" value="TreeGrafter"/>
</dbReference>
<dbReference type="GO" id="GO:0050660">
    <property type="term" value="F:flavin adenine dinucleotide binding"/>
    <property type="evidence" value="ECO:0007669"/>
    <property type="project" value="UniProtKB-UniRule"/>
</dbReference>
<dbReference type="GO" id="GO:0010181">
    <property type="term" value="F:FMN binding"/>
    <property type="evidence" value="ECO:0007669"/>
    <property type="project" value="InterPro"/>
</dbReference>
<dbReference type="GO" id="GO:0051287">
    <property type="term" value="F:NAD binding"/>
    <property type="evidence" value="ECO:0007669"/>
    <property type="project" value="UniProtKB-UniRule"/>
</dbReference>
<dbReference type="GO" id="GO:0050136">
    <property type="term" value="F:NADH:ubiquinone reductase (non-electrogenic) activity"/>
    <property type="evidence" value="ECO:0007669"/>
    <property type="project" value="RHEA"/>
</dbReference>
<dbReference type="GO" id="GO:0050661">
    <property type="term" value="F:NADP binding"/>
    <property type="evidence" value="ECO:0007669"/>
    <property type="project" value="UniProtKB-UniRule"/>
</dbReference>
<dbReference type="GO" id="GO:0008753">
    <property type="term" value="F:NADPH dehydrogenase (quinone) activity"/>
    <property type="evidence" value="ECO:0007669"/>
    <property type="project" value="RHEA"/>
</dbReference>
<dbReference type="FunFam" id="3.40.50.360:FF:000004">
    <property type="entry name" value="NAD(P)H dehydrogenase (quinone)"/>
    <property type="match status" value="1"/>
</dbReference>
<dbReference type="Gene3D" id="3.40.50.360">
    <property type="match status" value="1"/>
</dbReference>
<dbReference type="HAMAP" id="MF_01017">
    <property type="entry name" value="NQOR"/>
    <property type="match status" value="1"/>
</dbReference>
<dbReference type="InterPro" id="IPR008254">
    <property type="entry name" value="Flavodoxin/NO_synth"/>
</dbReference>
<dbReference type="InterPro" id="IPR029039">
    <property type="entry name" value="Flavoprotein-like_sf"/>
</dbReference>
<dbReference type="InterPro" id="IPR010089">
    <property type="entry name" value="Flavoprotein_WrbA-like"/>
</dbReference>
<dbReference type="InterPro" id="IPR005025">
    <property type="entry name" value="FMN_Rdtase-like_dom"/>
</dbReference>
<dbReference type="InterPro" id="IPR037513">
    <property type="entry name" value="NQO"/>
</dbReference>
<dbReference type="NCBIfam" id="TIGR01755">
    <property type="entry name" value="flav_wrbA"/>
    <property type="match status" value="1"/>
</dbReference>
<dbReference type="NCBIfam" id="NF002999">
    <property type="entry name" value="PRK03767.1"/>
    <property type="match status" value="1"/>
</dbReference>
<dbReference type="PANTHER" id="PTHR30546">
    <property type="entry name" value="FLAVODOXIN-RELATED PROTEIN WRBA-RELATED"/>
    <property type="match status" value="1"/>
</dbReference>
<dbReference type="PANTHER" id="PTHR30546:SF23">
    <property type="entry name" value="FLAVOPROTEIN-LIKE PROTEIN YCP4-RELATED"/>
    <property type="match status" value="1"/>
</dbReference>
<dbReference type="Pfam" id="PF03358">
    <property type="entry name" value="FMN_red"/>
    <property type="match status" value="1"/>
</dbReference>
<dbReference type="SUPFAM" id="SSF52218">
    <property type="entry name" value="Flavoproteins"/>
    <property type="match status" value="1"/>
</dbReference>
<dbReference type="PROSITE" id="PS50902">
    <property type="entry name" value="FLAVODOXIN_LIKE"/>
    <property type="match status" value="1"/>
</dbReference>
<organism>
    <name type="scientific">Escherichia coli (strain K12 / MC4100 / BW2952)</name>
    <dbReference type="NCBI Taxonomy" id="595496"/>
    <lineage>
        <taxon>Bacteria</taxon>
        <taxon>Pseudomonadati</taxon>
        <taxon>Pseudomonadota</taxon>
        <taxon>Gammaproteobacteria</taxon>
        <taxon>Enterobacterales</taxon>
        <taxon>Enterobacteriaceae</taxon>
        <taxon>Escherichia</taxon>
    </lineage>
</organism>
<evidence type="ECO:0000255" key="1">
    <source>
        <dbReference type="HAMAP-Rule" id="MF_01017"/>
    </source>
</evidence>
<reference key="1">
    <citation type="journal article" date="2009" name="J. Bacteriol.">
        <title>Genomic sequencing reveals regulatory mutations and recombinational events in the widely used MC4100 lineage of Escherichia coli K-12.</title>
        <authorList>
            <person name="Ferenci T."/>
            <person name="Zhou Z."/>
            <person name="Betteridge T."/>
            <person name="Ren Y."/>
            <person name="Liu Y."/>
            <person name="Feng L."/>
            <person name="Reeves P.R."/>
            <person name="Wang L."/>
        </authorList>
    </citation>
    <scope>NUCLEOTIDE SEQUENCE [LARGE SCALE GENOMIC DNA]</scope>
    <source>
        <strain>K12 / MC4100 / BW2952</strain>
    </source>
</reference>
<proteinExistence type="inferred from homology"/>
<accession>C4ZQD2</accession>
<name>NQOR_ECOBW</name>
<keyword id="KW-0285">Flavoprotein</keyword>
<keyword id="KW-0288">FMN</keyword>
<keyword id="KW-0520">NAD</keyword>
<keyword id="KW-0521">NADP</keyword>
<keyword id="KW-0547">Nucleotide-binding</keyword>
<keyword id="KW-0560">Oxidoreductase</keyword>
<protein>
    <recommendedName>
        <fullName evidence="1">NAD(P)H dehydrogenase (quinone)</fullName>
        <ecNumber evidence="1">1.6.5.2</ecNumber>
    </recommendedName>
    <alternativeName>
        <fullName>Flavoprotein WrbA</fullName>
    </alternativeName>
    <alternativeName>
        <fullName evidence="1">NAD(P)H:quinone oxidoreductase</fullName>
        <shortName evidence="1">NQO</shortName>
    </alternativeName>
</protein>
<feature type="chain" id="PRO_1000213245" description="NAD(P)H dehydrogenase (quinone)">
    <location>
        <begin position="1"/>
        <end position="198"/>
    </location>
</feature>
<feature type="domain" description="Flavodoxin-like" evidence="1">
    <location>
        <begin position="4"/>
        <end position="189"/>
    </location>
</feature>
<feature type="binding site" evidence="1">
    <location>
        <begin position="10"/>
        <end position="15"/>
    </location>
    <ligand>
        <name>FMN</name>
        <dbReference type="ChEBI" id="CHEBI:58210"/>
    </ligand>
</feature>
<feature type="binding site" evidence="1">
    <location>
        <position position="12"/>
    </location>
    <ligand>
        <name>NAD(+)</name>
        <dbReference type="ChEBI" id="CHEBI:57540"/>
    </ligand>
</feature>
<feature type="binding site" evidence="1">
    <location>
        <begin position="78"/>
        <end position="80"/>
    </location>
    <ligand>
        <name>FMN</name>
        <dbReference type="ChEBI" id="CHEBI:58210"/>
    </ligand>
</feature>
<feature type="binding site" evidence="1">
    <location>
        <position position="98"/>
    </location>
    <ligand>
        <name>substrate</name>
    </ligand>
</feature>
<feature type="binding site" evidence="1">
    <location>
        <begin position="113"/>
        <end position="118"/>
    </location>
    <ligand>
        <name>FMN</name>
        <dbReference type="ChEBI" id="CHEBI:58210"/>
    </ligand>
</feature>
<feature type="binding site" evidence="1">
    <location>
        <position position="133"/>
    </location>
    <ligand>
        <name>FMN</name>
        <dbReference type="ChEBI" id="CHEBI:58210"/>
    </ligand>
</feature>
<gene>
    <name type="ordered locus">BWG_0858</name>
</gene>